<comment type="function">
    <text evidence="1">F(1)F(0) ATP synthase produces ATP from ADP in the presence of a proton or sodium gradient. F-type ATPases consist of two structural domains, F(1) containing the extramembraneous catalytic core and F(0) containing the membrane proton channel, linked together by a central stalk and a peripheral stalk. During catalysis, ATP synthesis in the catalytic domain of F(1) is coupled via a rotary mechanism of the central stalk subunits to proton translocation.</text>
</comment>
<comment type="function">
    <text evidence="1">This protein is part of the stalk that links CF(0) to CF(1). It either transmits conformational changes from CF(0) to CF(1) or is implicated in proton conduction.</text>
</comment>
<comment type="subunit">
    <text evidence="1">F-type ATPases have 2 components, F(1) - the catalytic core - and F(0) - the membrane proton channel. F(1) has five subunits: alpha(3), beta(3), gamma(1), delta(1), epsilon(1). CF(0) has four main subunits: a(1), b(1), b'(1) and c(10-14). The alpha and beta chains form an alternating ring which encloses part of the gamma chain. F(1) is attached to F(0) by a central stalk formed by the gamma and epsilon chains, while a peripheral stalk is formed by the delta, b and b' chains.</text>
</comment>
<comment type="subcellular location">
    <subcellularLocation>
        <location evidence="1">Cellular thylakoid membrane</location>
        <topology evidence="1">Peripheral membrane protein</topology>
    </subcellularLocation>
</comment>
<comment type="similarity">
    <text evidence="1">Belongs to the ATPase delta chain family.</text>
</comment>
<name>ATPD_SYNE7</name>
<gene>
    <name evidence="1" type="primary">atpH</name>
    <name evidence="1" type="synonym">atpD</name>
    <name type="ordered locus">Synpcc7942_0335</name>
</gene>
<evidence type="ECO:0000255" key="1">
    <source>
        <dbReference type="HAMAP-Rule" id="MF_01416"/>
    </source>
</evidence>
<protein>
    <recommendedName>
        <fullName evidence="1">ATP synthase subunit delta</fullName>
    </recommendedName>
    <alternativeName>
        <fullName evidence="1">ATP synthase F(1) sector subunit delta</fullName>
    </alternativeName>
    <alternativeName>
        <fullName evidence="1">F-type ATPase subunit delta</fullName>
        <shortName evidence="1">F-ATPase subunit delta</shortName>
    </alternativeName>
</protein>
<proteinExistence type="inferred from homology"/>
<organism>
    <name type="scientific">Synechococcus elongatus (strain ATCC 33912 / PCC 7942 / FACHB-805)</name>
    <name type="common">Anacystis nidulans R2</name>
    <dbReference type="NCBI Taxonomy" id="1140"/>
    <lineage>
        <taxon>Bacteria</taxon>
        <taxon>Bacillati</taxon>
        <taxon>Cyanobacteriota</taxon>
        <taxon>Cyanophyceae</taxon>
        <taxon>Synechococcales</taxon>
        <taxon>Synechococcaceae</taxon>
        <taxon>Synechococcus</taxon>
    </lineage>
</organism>
<sequence>MTSTSQLFDPYAEALMAIAREQGLEDRFGEDAALFRSTLAASADLRHLLENPTLFSSQKKAVLNQVFGSSVHPLVLNFLNLLVDRNRIAFLDGIADRYQALLRKLRNVVRADVSSAVPLTEAQVQVITEKVKQLTGAAGVEIESQVDADLLGGVIIKVGSQVLDASLRGQLKRISISLAA</sequence>
<dbReference type="EMBL" id="CP000100">
    <property type="protein sequence ID" value="ABB56367.1"/>
    <property type="molecule type" value="Genomic_DNA"/>
</dbReference>
<dbReference type="RefSeq" id="WP_011243490.1">
    <property type="nucleotide sequence ID" value="NZ_JACJTX010000002.1"/>
</dbReference>
<dbReference type="SMR" id="Q31RF2"/>
<dbReference type="STRING" id="1140.Synpcc7942_0335"/>
<dbReference type="PaxDb" id="1140-Synpcc7942_0335"/>
<dbReference type="GeneID" id="72429151"/>
<dbReference type="KEGG" id="syf:Synpcc7942_0335"/>
<dbReference type="eggNOG" id="COG0712">
    <property type="taxonomic scope" value="Bacteria"/>
</dbReference>
<dbReference type="HOGENOM" id="CLU_085114_4_0_3"/>
<dbReference type="OrthoDB" id="9802471at2"/>
<dbReference type="BioCyc" id="MetaCyc:SYNPCC7942_0335-MONOMER"/>
<dbReference type="BioCyc" id="SYNEL:SYNPCC7942_0335-MONOMER"/>
<dbReference type="Proteomes" id="UP000889800">
    <property type="component" value="Chromosome"/>
</dbReference>
<dbReference type="GO" id="GO:0031676">
    <property type="term" value="C:plasma membrane-derived thylakoid membrane"/>
    <property type="evidence" value="ECO:0007669"/>
    <property type="project" value="UniProtKB-SubCell"/>
</dbReference>
<dbReference type="GO" id="GO:0045259">
    <property type="term" value="C:proton-transporting ATP synthase complex"/>
    <property type="evidence" value="ECO:0007669"/>
    <property type="project" value="UniProtKB-KW"/>
</dbReference>
<dbReference type="GO" id="GO:0046933">
    <property type="term" value="F:proton-transporting ATP synthase activity, rotational mechanism"/>
    <property type="evidence" value="ECO:0007669"/>
    <property type="project" value="UniProtKB-UniRule"/>
</dbReference>
<dbReference type="Gene3D" id="1.10.520.20">
    <property type="entry name" value="N-terminal domain of the delta subunit of the F1F0-ATP synthase"/>
    <property type="match status" value="1"/>
</dbReference>
<dbReference type="HAMAP" id="MF_01416">
    <property type="entry name" value="ATP_synth_delta_bact"/>
    <property type="match status" value="1"/>
</dbReference>
<dbReference type="InterPro" id="IPR026015">
    <property type="entry name" value="ATP_synth_OSCP/delta_N_sf"/>
</dbReference>
<dbReference type="InterPro" id="IPR020781">
    <property type="entry name" value="ATPase_OSCP/d_CS"/>
</dbReference>
<dbReference type="InterPro" id="IPR000711">
    <property type="entry name" value="ATPase_OSCP/dsu"/>
</dbReference>
<dbReference type="NCBIfam" id="TIGR01145">
    <property type="entry name" value="ATP_synt_delta"/>
    <property type="match status" value="1"/>
</dbReference>
<dbReference type="PANTHER" id="PTHR11910">
    <property type="entry name" value="ATP SYNTHASE DELTA CHAIN"/>
    <property type="match status" value="1"/>
</dbReference>
<dbReference type="Pfam" id="PF00213">
    <property type="entry name" value="OSCP"/>
    <property type="match status" value="1"/>
</dbReference>
<dbReference type="PRINTS" id="PR00125">
    <property type="entry name" value="ATPASEDELTA"/>
</dbReference>
<dbReference type="SUPFAM" id="SSF47928">
    <property type="entry name" value="N-terminal domain of the delta subunit of the F1F0-ATP synthase"/>
    <property type="match status" value="1"/>
</dbReference>
<dbReference type="PROSITE" id="PS00389">
    <property type="entry name" value="ATPASE_DELTA"/>
    <property type="match status" value="1"/>
</dbReference>
<feature type="chain" id="PRO_0000371174" description="ATP synthase subunit delta">
    <location>
        <begin position="1"/>
        <end position="180"/>
    </location>
</feature>
<accession>Q31RF2</accession>
<reference key="1">
    <citation type="submission" date="2005-08" db="EMBL/GenBank/DDBJ databases">
        <title>Complete sequence of chromosome 1 of Synechococcus elongatus PCC 7942.</title>
        <authorList>
            <consortium name="US DOE Joint Genome Institute"/>
            <person name="Copeland A."/>
            <person name="Lucas S."/>
            <person name="Lapidus A."/>
            <person name="Barry K."/>
            <person name="Detter J.C."/>
            <person name="Glavina T."/>
            <person name="Hammon N."/>
            <person name="Israni S."/>
            <person name="Pitluck S."/>
            <person name="Schmutz J."/>
            <person name="Larimer F."/>
            <person name="Land M."/>
            <person name="Kyrpides N."/>
            <person name="Lykidis A."/>
            <person name="Golden S."/>
            <person name="Richardson P."/>
        </authorList>
    </citation>
    <scope>NUCLEOTIDE SEQUENCE [LARGE SCALE GENOMIC DNA]</scope>
    <source>
        <strain>ATCC 33912 / PCC 7942 / FACHB-805</strain>
    </source>
</reference>
<keyword id="KW-0066">ATP synthesis</keyword>
<keyword id="KW-0139">CF(1)</keyword>
<keyword id="KW-0375">Hydrogen ion transport</keyword>
<keyword id="KW-0406">Ion transport</keyword>
<keyword id="KW-0472">Membrane</keyword>
<keyword id="KW-1185">Reference proteome</keyword>
<keyword id="KW-0793">Thylakoid</keyword>
<keyword id="KW-0813">Transport</keyword>